<gene>
    <name type="primary">pgmB</name>
    <name type="ORF">AN2867</name>
</gene>
<sequence>MSVQTVSIQPFGDQKPGTSGLRKKVKIFQQENYTESFLTSIFLSIPEGAQDAFLVIGGDGRYYNSDVIQKIAKIGAAYGVKKLIVGQNGILSTPAASNLIRKRKATGGILLTASHNPGGPDNDFGIKYNLTNGAPAPEQVTNKIYEVSKSLTSYKYIDLPEVDTTTVGTRSYGPLEVEVVHSTEDYVSMMKEIFDFDLIRSFLKKHPDFKVLFDGMHGVTGPYGIDIFVNELGLPSSSTMNCIPKPDFGGGHPDPNLVYAHELVEAVDKNGIHFGAASDGDGDRNMIYGANTFVSPGDSLAIIAHHAKLIPWFQKHGVDGLARSMPTSGAVDRVAKAQGLQSYEVPTGWKFFCNLFDNKKMSICGEESFGTGSNHIREKDGVWAIVAWLNVIAGVAEQKPNETPSIASIQAEFWETYGRTFFTRYDYENVDSDGANKLIAALSEKAVDNKSSFVGSTISGRKVVDSGNFAYTDLDGSVTKNQGLYVKFDDGSRLVVRLSGTGSSGATIRLYVEKYEGDKSKYQMATQDYLKDNVGLALELLKFKEFVGREEPDVKT</sequence>
<proteinExistence type="inferred from homology"/>
<feature type="chain" id="PRO_0000147794" description="Phosphoglucomutase">
    <location>
        <begin position="1"/>
        <end position="556"/>
    </location>
</feature>
<feature type="active site" description="Phosphoserine intermediate" evidence="1">
    <location>
        <position position="114"/>
    </location>
</feature>
<feature type="binding site" evidence="1">
    <location>
        <position position="22"/>
    </location>
    <ligand>
        <name>alpha-D-glucose 1,6-bisphosphate</name>
        <dbReference type="ChEBI" id="CHEBI:58392"/>
    </ligand>
</feature>
<feature type="binding site" evidence="1">
    <location>
        <position position="114"/>
    </location>
    <ligand>
        <name>alpha-D-glucose 1,6-bisphosphate</name>
        <dbReference type="ChEBI" id="CHEBI:58392"/>
    </ligand>
</feature>
<feature type="binding site" description="via phosphate group" evidence="1">
    <location>
        <position position="114"/>
    </location>
    <ligand>
        <name>Mg(2+)</name>
        <dbReference type="ChEBI" id="CHEBI:18420"/>
    </ligand>
</feature>
<feature type="binding site" evidence="1">
    <location>
        <position position="279"/>
    </location>
    <ligand>
        <name>Mg(2+)</name>
        <dbReference type="ChEBI" id="CHEBI:18420"/>
    </ligand>
</feature>
<feature type="binding site" evidence="1">
    <location>
        <position position="281"/>
    </location>
    <ligand>
        <name>Mg(2+)</name>
        <dbReference type="ChEBI" id="CHEBI:18420"/>
    </ligand>
</feature>
<feature type="binding site" evidence="1">
    <location>
        <position position="283"/>
    </location>
    <ligand>
        <name>alpha-D-glucose 1,6-bisphosphate</name>
        <dbReference type="ChEBI" id="CHEBI:58392"/>
    </ligand>
</feature>
<feature type="binding site" evidence="1">
    <location>
        <position position="283"/>
    </location>
    <ligand>
        <name>Mg(2+)</name>
        <dbReference type="ChEBI" id="CHEBI:18420"/>
    </ligand>
</feature>
<feature type="binding site" evidence="1">
    <location>
        <position position="284"/>
    </location>
    <ligand>
        <name>alpha-D-glucose 1,6-bisphosphate</name>
        <dbReference type="ChEBI" id="CHEBI:58392"/>
    </ligand>
</feature>
<feature type="binding site" evidence="1">
    <location>
        <position position="347"/>
    </location>
    <ligand>
        <name>alpha-D-glucose 1,6-bisphosphate</name>
        <dbReference type="ChEBI" id="CHEBI:58392"/>
    </ligand>
</feature>
<feature type="binding site" evidence="1">
    <location>
        <position position="366"/>
    </location>
    <ligand>
        <name>alpha-D-glucose 1,6-bisphosphate</name>
        <dbReference type="ChEBI" id="CHEBI:58392"/>
    </ligand>
</feature>
<feature type="binding site" evidence="1">
    <location>
        <position position="368"/>
    </location>
    <ligand>
        <name>alpha-D-glucose 1,6-bisphosphate</name>
        <dbReference type="ChEBI" id="CHEBI:58392"/>
    </ligand>
</feature>
<feature type="binding site" evidence="1">
    <location>
        <position position="379"/>
    </location>
    <ligand>
        <name>alpha-D-glucose 1,6-bisphosphate</name>
        <dbReference type="ChEBI" id="CHEBI:58392"/>
    </ligand>
</feature>
<feature type="modified residue" description="Phosphoserine" evidence="2">
    <location>
        <position position="114"/>
    </location>
</feature>
<feature type="sequence conflict" description="In Ref. 1; AAF36531." evidence="4" ref="1">
    <original>VDNKSSFVGSTIS</original>
    <variation>ESTTRAHLLAAPSL</variation>
    <location>
        <begin position="447"/>
        <end position="459"/>
    </location>
</feature>
<protein>
    <recommendedName>
        <fullName evidence="2">Phosphoglucomutase</fullName>
        <shortName evidence="2">PGM</shortName>
        <ecNumber evidence="2">5.4.2.2</ecNumber>
    </recommendedName>
    <alternativeName>
        <fullName>Glucose phosphomutase</fullName>
    </alternativeName>
</protein>
<keyword id="KW-0119">Carbohydrate metabolism</keyword>
<keyword id="KW-0963">Cytoplasm</keyword>
<keyword id="KW-0313">Glucose metabolism</keyword>
<keyword id="KW-0413">Isomerase</keyword>
<keyword id="KW-0460">Magnesium</keyword>
<keyword id="KW-0479">Metal-binding</keyword>
<keyword id="KW-0597">Phosphoprotein</keyword>
<keyword id="KW-1185">Reference proteome</keyword>
<dbReference type="EC" id="5.4.2.2" evidence="2"/>
<dbReference type="EMBL" id="AF135264">
    <property type="protein sequence ID" value="AAF36531.1"/>
    <property type="molecule type" value="Genomic_DNA"/>
</dbReference>
<dbReference type="EMBL" id="AACD01000051">
    <property type="protein sequence ID" value="EAA63438.1"/>
    <property type="molecule type" value="Genomic_DNA"/>
</dbReference>
<dbReference type="EMBL" id="BN001306">
    <property type="protein sequence ID" value="CBF83845.1"/>
    <property type="molecule type" value="Genomic_DNA"/>
</dbReference>
<dbReference type="RefSeq" id="XP_660471.1">
    <property type="nucleotide sequence ID" value="XM_655379.1"/>
</dbReference>
<dbReference type="SMR" id="Q9P931"/>
<dbReference type="FunCoup" id="Q9P931">
    <property type="interactions" value="636"/>
</dbReference>
<dbReference type="STRING" id="227321.Q9P931"/>
<dbReference type="EnsemblFungi" id="CBF83845">
    <property type="protein sequence ID" value="CBF83845"/>
    <property type="gene ID" value="ANIA_02867"/>
</dbReference>
<dbReference type="KEGG" id="ani:ANIA_02867"/>
<dbReference type="VEuPathDB" id="FungiDB:AN2867"/>
<dbReference type="eggNOG" id="KOG0625">
    <property type="taxonomic scope" value="Eukaryota"/>
</dbReference>
<dbReference type="HOGENOM" id="CLU_009330_0_1_1"/>
<dbReference type="InParanoid" id="Q9P931"/>
<dbReference type="OMA" id="WIQDRAN"/>
<dbReference type="OrthoDB" id="2291at2759"/>
<dbReference type="Proteomes" id="UP000000560">
    <property type="component" value="Chromosome VI"/>
</dbReference>
<dbReference type="GO" id="GO:0005829">
    <property type="term" value="C:cytosol"/>
    <property type="evidence" value="ECO:0000318"/>
    <property type="project" value="GO_Central"/>
</dbReference>
<dbReference type="GO" id="GO:0000287">
    <property type="term" value="F:magnesium ion binding"/>
    <property type="evidence" value="ECO:0007669"/>
    <property type="project" value="InterPro"/>
</dbReference>
<dbReference type="GO" id="GO:0004614">
    <property type="term" value="F:phosphoglucomutase activity"/>
    <property type="evidence" value="ECO:0000314"/>
    <property type="project" value="AspGD"/>
</dbReference>
<dbReference type="GO" id="GO:0005975">
    <property type="term" value="P:carbohydrate metabolic process"/>
    <property type="evidence" value="ECO:0000318"/>
    <property type="project" value="GO_Central"/>
</dbReference>
<dbReference type="GO" id="GO:0006006">
    <property type="term" value="P:glucose metabolic process"/>
    <property type="evidence" value="ECO:0007669"/>
    <property type="project" value="UniProtKB-KW"/>
</dbReference>
<dbReference type="CDD" id="cd03085">
    <property type="entry name" value="PGM1"/>
    <property type="match status" value="1"/>
</dbReference>
<dbReference type="FunFam" id="3.30.310.50:FF:000002">
    <property type="entry name" value="Phosphoglucomutase 5"/>
    <property type="match status" value="1"/>
</dbReference>
<dbReference type="FunFam" id="3.40.120.10:FF:000004">
    <property type="entry name" value="Phosphoglucomutase 5"/>
    <property type="match status" value="1"/>
</dbReference>
<dbReference type="FunFam" id="3.40.120.10:FF:000005">
    <property type="entry name" value="Phosphoglucomutase 5"/>
    <property type="match status" value="1"/>
</dbReference>
<dbReference type="FunFam" id="3.40.120.10:FF:000006">
    <property type="entry name" value="Phosphoglucomutase PgmA"/>
    <property type="match status" value="1"/>
</dbReference>
<dbReference type="Gene3D" id="3.40.120.10">
    <property type="entry name" value="Alpha-D-Glucose-1,6-Bisphosphate, subunit A, domain 3"/>
    <property type="match status" value="3"/>
</dbReference>
<dbReference type="Gene3D" id="3.30.310.50">
    <property type="entry name" value="Alpha-D-phosphohexomutase, C-terminal domain"/>
    <property type="match status" value="1"/>
</dbReference>
<dbReference type="InterPro" id="IPR005844">
    <property type="entry name" value="A-D-PHexomutase_a/b/a-I"/>
</dbReference>
<dbReference type="InterPro" id="IPR016055">
    <property type="entry name" value="A-D-PHexomutase_a/b/a-I/II/III"/>
</dbReference>
<dbReference type="InterPro" id="IPR005845">
    <property type="entry name" value="A-D-PHexomutase_a/b/a-II"/>
</dbReference>
<dbReference type="InterPro" id="IPR005846">
    <property type="entry name" value="A-D-PHexomutase_a/b/a-III"/>
</dbReference>
<dbReference type="InterPro" id="IPR036900">
    <property type="entry name" value="A-D-PHexomutase_C_sf"/>
</dbReference>
<dbReference type="InterPro" id="IPR016066">
    <property type="entry name" value="A-D-PHexomutase_CS"/>
</dbReference>
<dbReference type="InterPro" id="IPR005841">
    <property type="entry name" value="Alpha-D-phosphohexomutase_SF"/>
</dbReference>
<dbReference type="InterPro" id="IPR045244">
    <property type="entry name" value="PGM"/>
</dbReference>
<dbReference type="NCBIfam" id="NF005737">
    <property type="entry name" value="PRK07564.1-1"/>
    <property type="match status" value="1"/>
</dbReference>
<dbReference type="PANTHER" id="PTHR22573:SF2">
    <property type="entry name" value="PHOSPHOGLUCOMUTASE"/>
    <property type="match status" value="1"/>
</dbReference>
<dbReference type="PANTHER" id="PTHR22573">
    <property type="entry name" value="PHOSPHOHEXOMUTASE FAMILY MEMBER"/>
    <property type="match status" value="1"/>
</dbReference>
<dbReference type="Pfam" id="PF24947">
    <property type="entry name" value="PGM1_C_vert_fung"/>
    <property type="match status" value="1"/>
</dbReference>
<dbReference type="Pfam" id="PF02878">
    <property type="entry name" value="PGM_PMM_I"/>
    <property type="match status" value="1"/>
</dbReference>
<dbReference type="Pfam" id="PF02879">
    <property type="entry name" value="PGM_PMM_II"/>
    <property type="match status" value="1"/>
</dbReference>
<dbReference type="Pfam" id="PF02880">
    <property type="entry name" value="PGM_PMM_III"/>
    <property type="match status" value="1"/>
</dbReference>
<dbReference type="PRINTS" id="PR00509">
    <property type="entry name" value="PGMPMM"/>
</dbReference>
<dbReference type="SUPFAM" id="SSF55957">
    <property type="entry name" value="Phosphoglucomutase, C-terminal domain"/>
    <property type="match status" value="1"/>
</dbReference>
<dbReference type="SUPFAM" id="SSF53738">
    <property type="entry name" value="Phosphoglucomutase, first 3 domains"/>
    <property type="match status" value="3"/>
</dbReference>
<dbReference type="PROSITE" id="PS00710">
    <property type="entry name" value="PGM_PMM"/>
    <property type="match status" value="1"/>
</dbReference>
<reference key="1">
    <citation type="journal article" date="2000" name="Mol. Gen. Genet.">
        <title>Developmental and metabolic regulation of the phosphoglucomutase-encoding gene, pgmB, of Aspergillus nidulans.</title>
        <authorList>
            <person name="Hoffmann B."/>
            <person name="LaPaglia S.K."/>
            <person name="Kubler E."/>
            <person name="Andermann M."/>
            <person name="Eckert S.E."/>
            <person name="Braus G.H."/>
        </authorList>
    </citation>
    <scope>NUCLEOTIDE SEQUENCE [GENOMIC DNA]</scope>
    <scope>FUNCTION</scope>
    <source>
        <strain>FGSC A4 / ATCC 38163 / CBS 112.46 / NRRL 194 / M139</strain>
    </source>
</reference>
<reference key="2">
    <citation type="journal article" date="2005" name="Nature">
        <title>Sequencing of Aspergillus nidulans and comparative analysis with A. fumigatus and A. oryzae.</title>
        <authorList>
            <person name="Galagan J.E."/>
            <person name="Calvo S.E."/>
            <person name="Cuomo C."/>
            <person name="Ma L.-J."/>
            <person name="Wortman J.R."/>
            <person name="Batzoglou S."/>
            <person name="Lee S.-I."/>
            <person name="Bastuerkmen M."/>
            <person name="Spevak C.C."/>
            <person name="Clutterbuck J."/>
            <person name="Kapitonov V."/>
            <person name="Jurka J."/>
            <person name="Scazzocchio C."/>
            <person name="Farman M.L."/>
            <person name="Butler J."/>
            <person name="Purcell S."/>
            <person name="Harris S."/>
            <person name="Braus G.H."/>
            <person name="Draht O."/>
            <person name="Busch S."/>
            <person name="D'Enfert C."/>
            <person name="Bouchier C."/>
            <person name="Goldman G.H."/>
            <person name="Bell-Pedersen D."/>
            <person name="Griffiths-Jones S."/>
            <person name="Doonan J.H."/>
            <person name="Yu J."/>
            <person name="Vienken K."/>
            <person name="Pain A."/>
            <person name="Freitag M."/>
            <person name="Selker E.U."/>
            <person name="Archer D.B."/>
            <person name="Penalva M.A."/>
            <person name="Oakley B.R."/>
            <person name="Momany M."/>
            <person name="Tanaka T."/>
            <person name="Kumagai T."/>
            <person name="Asai K."/>
            <person name="Machida M."/>
            <person name="Nierman W.C."/>
            <person name="Denning D.W."/>
            <person name="Caddick M.X."/>
            <person name="Hynes M."/>
            <person name="Paoletti M."/>
            <person name="Fischer R."/>
            <person name="Miller B.L."/>
            <person name="Dyer P.S."/>
            <person name="Sachs M.S."/>
            <person name="Osmani S.A."/>
            <person name="Birren B.W."/>
        </authorList>
    </citation>
    <scope>NUCLEOTIDE SEQUENCE [LARGE SCALE GENOMIC DNA]</scope>
    <source>
        <strain>FGSC A4 / ATCC 38163 / CBS 112.46 / NRRL 194 / M139</strain>
    </source>
</reference>
<reference key="3">
    <citation type="journal article" date="2009" name="Fungal Genet. Biol.">
        <title>The 2008 update of the Aspergillus nidulans genome annotation: a community effort.</title>
        <authorList>
            <person name="Wortman J.R."/>
            <person name="Gilsenan J.M."/>
            <person name="Joardar V."/>
            <person name="Deegan J."/>
            <person name="Clutterbuck J."/>
            <person name="Andersen M.R."/>
            <person name="Archer D."/>
            <person name="Bencina M."/>
            <person name="Braus G."/>
            <person name="Coutinho P."/>
            <person name="von Dohren H."/>
            <person name="Doonan J."/>
            <person name="Driessen A.J."/>
            <person name="Durek P."/>
            <person name="Espeso E."/>
            <person name="Fekete E."/>
            <person name="Flipphi M."/>
            <person name="Estrada C.G."/>
            <person name="Geysens S."/>
            <person name="Goldman G."/>
            <person name="de Groot P.W."/>
            <person name="Hansen K."/>
            <person name="Harris S.D."/>
            <person name="Heinekamp T."/>
            <person name="Helmstaedt K."/>
            <person name="Henrissat B."/>
            <person name="Hofmann G."/>
            <person name="Homan T."/>
            <person name="Horio T."/>
            <person name="Horiuchi H."/>
            <person name="James S."/>
            <person name="Jones M."/>
            <person name="Karaffa L."/>
            <person name="Karanyi Z."/>
            <person name="Kato M."/>
            <person name="Keller N."/>
            <person name="Kelly D.E."/>
            <person name="Kiel J.A."/>
            <person name="Kim J.M."/>
            <person name="van der Klei I.J."/>
            <person name="Klis F.M."/>
            <person name="Kovalchuk A."/>
            <person name="Krasevec N."/>
            <person name="Kubicek C.P."/>
            <person name="Liu B."/>
            <person name="Maccabe A."/>
            <person name="Meyer V."/>
            <person name="Mirabito P."/>
            <person name="Miskei M."/>
            <person name="Mos M."/>
            <person name="Mullins J."/>
            <person name="Nelson D.R."/>
            <person name="Nielsen J."/>
            <person name="Oakley B.R."/>
            <person name="Osmani S.A."/>
            <person name="Pakula T."/>
            <person name="Paszewski A."/>
            <person name="Paulsen I."/>
            <person name="Pilsyk S."/>
            <person name="Pocsi I."/>
            <person name="Punt P.J."/>
            <person name="Ram A.F."/>
            <person name="Ren Q."/>
            <person name="Robellet X."/>
            <person name="Robson G."/>
            <person name="Seiboth B."/>
            <person name="van Solingen P."/>
            <person name="Specht T."/>
            <person name="Sun J."/>
            <person name="Taheri-Talesh N."/>
            <person name="Takeshita N."/>
            <person name="Ussery D."/>
            <person name="vanKuyk P.A."/>
            <person name="Visser H."/>
            <person name="van de Vondervoort P.J."/>
            <person name="de Vries R.P."/>
            <person name="Walton J."/>
            <person name="Xiang X."/>
            <person name="Xiong Y."/>
            <person name="Zeng A.P."/>
            <person name="Brandt B.W."/>
            <person name="Cornell M.J."/>
            <person name="van den Hondel C.A."/>
            <person name="Visser J."/>
            <person name="Oliver S.G."/>
            <person name="Turner G."/>
        </authorList>
    </citation>
    <scope>GENOME REANNOTATION</scope>
    <source>
        <strain>FGSC A4 / ATCC 38163 / CBS 112.46 / NRRL 194 / M139</strain>
    </source>
</reference>
<accession>Q9P931</accession>
<accession>C8VJB7</accession>
<accession>Q5B9B3</accession>
<comment type="function">
    <text evidence="2 3">Catalyzes the reversible isomerization of alpha-D-glucose 1-phosphate to alpha-D-glucose 6-phosphate (PubMed:10660061). The mechanism proceeds via the intermediate compound alpha-D-glucose 1,6-bisphosphate (By similarity). Key enzyme in hexose metabolism (By similarity). The reverse reaction is an essential step for biosynthesis because glucose 1-phosphate is the starting point for the synthesis of UDP-glucose, which acts as a precursor for the synthesis of oligosaccharides and trehalose (By similarity).</text>
</comment>
<comment type="catalytic activity">
    <reaction evidence="2">
        <text>alpha-D-glucose 1-phosphate = alpha-D-glucose 6-phosphate</text>
        <dbReference type="Rhea" id="RHEA:23536"/>
        <dbReference type="ChEBI" id="CHEBI:58225"/>
        <dbReference type="ChEBI" id="CHEBI:58601"/>
        <dbReference type="EC" id="5.4.2.2"/>
    </reaction>
</comment>
<comment type="catalytic activity">
    <reaction evidence="2">
        <text>O-phospho-L-seryl-[protein] + alpha-D-glucose 1-phosphate = alpha-D-glucose 1,6-bisphosphate + L-seryl-[protein]</text>
        <dbReference type="Rhea" id="RHEA:68748"/>
        <dbReference type="Rhea" id="RHEA-COMP:9863"/>
        <dbReference type="Rhea" id="RHEA-COMP:11604"/>
        <dbReference type="ChEBI" id="CHEBI:29999"/>
        <dbReference type="ChEBI" id="CHEBI:58392"/>
        <dbReference type="ChEBI" id="CHEBI:58601"/>
        <dbReference type="ChEBI" id="CHEBI:83421"/>
    </reaction>
</comment>
<comment type="catalytic activity">
    <reaction evidence="2">
        <text>alpha-D-glucose 1,6-bisphosphate + L-seryl-[protein] = O-phospho-L-seryl-[protein] + alpha-D-glucose 6-phosphate</text>
        <dbReference type="Rhea" id="RHEA:68752"/>
        <dbReference type="Rhea" id="RHEA-COMP:9863"/>
        <dbReference type="Rhea" id="RHEA-COMP:11604"/>
        <dbReference type="ChEBI" id="CHEBI:29999"/>
        <dbReference type="ChEBI" id="CHEBI:58225"/>
        <dbReference type="ChEBI" id="CHEBI:58392"/>
        <dbReference type="ChEBI" id="CHEBI:83421"/>
    </reaction>
</comment>
<comment type="cofactor">
    <cofactor evidence="1">
        <name>Mg(2+)</name>
        <dbReference type="ChEBI" id="CHEBI:18420"/>
    </cofactor>
    <text evidence="1">Binds 1 Mg(2+) ion per subunit.</text>
</comment>
<comment type="subunit">
    <text evidence="2">Monomer.</text>
</comment>
<comment type="subcellular location">
    <subcellularLocation>
        <location evidence="2">Cytoplasm</location>
    </subcellularLocation>
</comment>
<comment type="similarity">
    <text evidence="4">Belongs to the phosphohexose mutase family.</text>
</comment>
<name>PGM_EMENI</name>
<organism>
    <name type="scientific">Emericella nidulans (strain FGSC A4 / ATCC 38163 / CBS 112.46 / NRRL 194 / M139)</name>
    <name type="common">Aspergillus nidulans</name>
    <dbReference type="NCBI Taxonomy" id="227321"/>
    <lineage>
        <taxon>Eukaryota</taxon>
        <taxon>Fungi</taxon>
        <taxon>Dikarya</taxon>
        <taxon>Ascomycota</taxon>
        <taxon>Pezizomycotina</taxon>
        <taxon>Eurotiomycetes</taxon>
        <taxon>Eurotiomycetidae</taxon>
        <taxon>Eurotiales</taxon>
        <taxon>Aspergillaceae</taxon>
        <taxon>Aspergillus</taxon>
        <taxon>Aspergillus subgen. Nidulantes</taxon>
    </lineage>
</organism>
<evidence type="ECO:0000250" key="1">
    <source>
        <dbReference type="UniProtKB" id="P00949"/>
    </source>
</evidence>
<evidence type="ECO:0000250" key="2">
    <source>
        <dbReference type="UniProtKB" id="P37012"/>
    </source>
</evidence>
<evidence type="ECO:0000269" key="3">
    <source>
    </source>
</evidence>
<evidence type="ECO:0000305" key="4"/>